<reference key="1">
    <citation type="journal article" date="1993" name="J. Biol. Chem.">
        <title>Complete coding sequence, intron/exon organization, and chromosomal location of the gene for the core I protein of human ubiquinol-cytochrome c reductase.</title>
        <authorList>
            <person name="Hoffman G.G."/>
            <person name="Lee S."/>
            <person name="Christiano A.M."/>
            <person name="Chung-Honet L.C."/>
            <person name="Cheng W."/>
            <person name="Katchman S."/>
            <person name="Uitto J."/>
            <person name="Greenspan D.S."/>
        </authorList>
    </citation>
    <scope>NUCLEOTIDE SEQUENCE [MRNA]</scope>
    <scope>VARIANT SER-301</scope>
    <source>
        <tissue>Placenta</tissue>
    </source>
</reference>
<reference key="2">
    <citation type="journal article" date="1994" name="Biochem. Mol. Biol. Int.">
        <title>A complete cDNA sequence for core I protein subunit of human ubiquinol-cytochrome c reductase.</title>
        <authorList>
            <person name="Islam M.M."/>
            <person name="Tanaka M."/>
            <person name="Suzuki H."/>
            <person name="Torii K."/>
            <person name="Hattori N."/>
            <person name="Ozawa T."/>
        </authorList>
    </citation>
    <scope>NUCLEOTIDE SEQUENCE [MRNA]</scope>
    <source>
        <tissue>Fibroblast</tissue>
    </source>
</reference>
<reference key="3">
    <citation type="journal article" date="1994" name="Biochem. Mol. Biol. Int.">
        <authorList>
            <person name="Islam M.M."/>
            <person name="Tanaka M."/>
            <person name="Suzuki H."/>
            <person name="Torii K."/>
            <person name="Hattori N."/>
            <person name="Ozawa T."/>
        </authorList>
    </citation>
    <scope>ERRATUM OF PUBMED:8069229</scope>
</reference>
<reference key="4">
    <citation type="journal article" date="1994" name="Biochem. Mol. Biol. Int.">
        <authorList>
            <person name="Islam M.M."/>
            <person name="Tanaka M."/>
            <person name="Suzuki H."/>
            <person name="Torii K."/>
            <person name="Hattori N."/>
            <person name="Ozawa T."/>
        </authorList>
    </citation>
    <scope>ERRATUM OF PUBMED:8069229</scope>
</reference>
<reference key="5">
    <citation type="journal article" date="2004" name="Nat. Genet.">
        <title>Complete sequencing and characterization of 21,243 full-length human cDNAs.</title>
        <authorList>
            <person name="Ota T."/>
            <person name="Suzuki Y."/>
            <person name="Nishikawa T."/>
            <person name="Otsuki T."/>
            <person name="Sugiyama T."/>
            <person name="Irie R."/>
            <person name="Wakamatsu A."/>
            <person name="Hayashi K."/>
            <person name="Sato H."/>
            <person name="Nagai K."/>
            <person name="Kimura K."/>
            <person name="Makita H."/>
            <person name="Sekine M."/>
            <person name="Obayashi M."/>
            <person name="Nishi T."/>
            <person name="Shibahara T."/>
            <person name="Tanaka T."/>
            <person name="Ishii S."/>
            <person name="Yamamoto J."/>
            <person name="Saito K."/>
            <person name="Kawai Y."/>
            <person name="Isono Y."/>
            <person name="Nakamura Y."/>
            <person name="Nagahari K."/>
            <person name="Murakami K."/>
            <person name="Yasuda T."/>
            <person name="Iwayanagi T."/>
            <person name="Wagatsuma M."/>
            <person name="Shiratori A."/>
            <person name="Sudo H."/>
            <person name="Hosoiri T."/>
            <person name="Kaku Y."/>
            <person name="Kodaira H."/>
            <person name="Kondo H."/>
            <person name="Sugawara M."/>
            <person name="Takahashi M."/>
            <person name="Kanda K."/>
            <person name="Yokoi T."/>
            <person name="Furuya T."/>
            <person name="Kikkawa E."/>
            <person name="Omura Y."/>
            <person name="Abe K."/>
            <person name="Kamihara K."/>
            <person name="Katsuta N."/>
            <person name="Sato K."/>
            <person name="Tanikawa M."/>
            <person name="Yamazaki M."/>
            <person name="Ninomiya K."/>
            <person name="Ishibashi T."/>
            <person name="Yamashita H."/>
            <person name="Murakawa K."/>
            <person name="Fujimori K."/>
            <person name="Tanai H."/>
            <person name="Kimata M."/>
            <person name="Watanabe M."/>
            <person name="Hiraoka S."/>
            <person name="Chiba Y."/>
            <person name="Ishida S."/>
            <person name="Ono Y."/>
            <person name="Takiguchi S."/>
            <person name="Watanabe S."/>
            <person name="Yosida M."/>
            <person name="Hotuta T."/>
            <person name="Kusano J."/>
            <person name="Kanehori K."/>
            <person name="Takahashi-Fujii A."/>
            <person name="Hara H."/>
            <person name="Tanase T.-O."/>
            <person name="Nomura Y."/>
            <person name="Togiya S."/>
            <person name="Komai F."/>
            <person name="Hara R."/>
            <person name="Takeuchi K."/>
            <person name="Arita M."/>
            <person name="Imose N."/>
            <person name="Musashino K."/>
            <person name="Yuuki H."/>
            <person name="Oshima A."/>
            <person name="Sasaki N."/>
            <person name="Aotsuka S."/>
            <person name="Yoshikawa Y."/>
            <person name="Matsunawa H."/>
            <person name="Ichihara T."/>
            <person name="Shiohata N."/>
            <person name="Sano S."/>
            <person name="Moriya S."/>
            <person name="Momiyama H."/>
            <person name="Satoh N."/>
            <person name="Takami S."/>
            <person name="Terashima Y."/>
            <person name="Suzuki O."/>
            <person name="Nakagawa S."/>
            <person name="Senoh A."/>
            <person name="Mizoguchi H."/>
            <person name="Goto Y."/>
            <person name="Shimizu F."/>
            <person name="Wakebe H."/>
            <person name="Hishigaki H."/>
            <person name="Watanabe T."/>
            <person name="Sugiyama A."/>
            <person name="Takemoto M."/>
            <person name="Kawakami B."/>
            <person name="Yamazaki M."/>
            <person name="Watanabe K."/>
            <person name="Kumagai A."/>
            <person name="Itakura S."/>
            <person name="Fukuzumi Y."/>
            <person name="Fujimori Y."/>
            <person name="Komiyama M."/>
            <person name="Tashiro H."/>
            <person name="Tanigami A."/>
            <person name="Fujiwara T."/>
            <person name="Ono T."/>
            <person name="Yamada K."/>
            <person name="Fujii Y."/>
            <person name="Ozaki K."/>
            <person name="Hirao M."/>
            <person name="Ohmori Y."/>
            <person name="Kawabata A."/>
            <person name="Hikiji T."/>
            <person name="Kobatake N."/>
            <person name="Inagaki H."/>
            <person name="Ikema Y."/>
            <person name="Okamoto S."/>
            <person name="Okitani R."/>
            <person name="Kawakami T."/>
            <person name="Noguchi S."/>
            <person name="Itoh T."/>
            <person name="Shigeta K."/>
            <person name="Senba T."/>
            <person name="Matsumura K."/>
            <person name="Nakajima Y."/>
            <person name="Mizuno T."/>
            <person name="Morinaga M."/>
            <person name="Sasaki M."/>
            <person name="Togashi T."/>
            <person name="Oyama M."/>
            <person name="Hata H."/>
            <person name="Watanabe M."/>
            <person name="Komatsu T."/>
            <person name="Mizushima-Sugano J."/>
            <person name="Satoh T."/>
            <person name="Shirai Y."/>
            <person name="Takahashi Y."/>
            <person name="Nakagawa K."/>
            <person name="Okumura K."/>
            <person name="Nagase T."/>
            <person name="Nomura N."/>
            <person name="Kikuchi H."/>
            <person name="Masuho Y."/>
            <person name="Yamashita R."/>
            <person name="Nakai K."/>
            <person name="Yada T."/>
            <person name="Nakamura Y."/>
            <person name="Ohara O."/>
            <person name="Isogai T."/>
            <person name="Sugano S."/>
        </authorList>
    </citation>
    <scope>NUCLEOTIDE SEQUENCE [LARGE SCALE MRNA]</scope>
    <source>
        <tissue>Subthalamic nucleus</tissue>
    </source>
</reference>
<reference key="6">
    <citation type="submission" date="2005-07" db="EMBL/GenBank/DDBJ databases">
        <authorList>
            <person name="Mural R.J."/>
            <person name="Istrail S."/>
            <person name="Sutton G.G."/>
            <person name="Florea L."/>
            <person name="Halpern A.L."/>
            <person name="Mobarry C.M."/>
            <person name="Lippert R."/>
            <person name="Walenz B."/>
            <person name="Shatkay H."/>
            <person name="Dew I."/>
            <person name="Miller J.R."/>
            <person name="Flanigan M.J."/>
            <person name="Edwards N.J."/>
            <person name="Bolanos R."/>
            <person name="Fasulo D."/>
            <person name="Halldorsson B.V."/>
            <person name="Hannenhalli S."/>
            <person name="Turner R."/>
            <person name="Yooseph S."/>
            <person name="Lu F."/>
            <person name="Nusskern D.R."/>
            <person name="Shue B.C."/>
            <person name="Zheng X.H."/>
            <person name="Zhong F."/>
            <person name="Delcher A.L."/>
            <person name="Huson D.H."/>
            <person name="Kravitz S.A."/>
            <person name="Mouchard L."/>
            <person name="Reinert K."/>
            <person name="Remington K.A."/>
            <person name="Clark A.G."/>
            <person name="Waterman M.S."/>
            <person name="Eichler E.E."/>
            <person name="Adams M.D."/>
            <person name="Hunkapiller M.W."/>
            <person name="Myers E.W."/>
            <person name="Venter J.C."/>
        </authorList>
    </citation>
    <scope>NUCLEOTIDE SEQUENCE [LARGE SCALE GENOMIC DNA]</scope>
</reference>
<reference key="7">
    <citation type="journal article" date="2004" name="Genome Res.">
        <title>The status, quality, and expansion of the NIH full-length cDNA project: the Mammalian Gene Collection (MGC).</title>
        <authorList>
            <consortium name="The MGC Project Team"/>
        </authorList>
    </citation>
    <scope>NUCLEOTIDE SEQUENCE [LARGE SCALE MRNA]</scope>
    <source>
        <tissue>Bone marrow</tissue>
    </source>
</reference>
<reference key="8">
    <citation type="journal article" date="1993" name="Electrophoresis">
        <title>Human liver protein map: update 1993.</title>
        <authorList>
            <person name="Hughes G.J."/>
            <person name="Frutiger S."/>
            <person name="Paquet N."/>
            <person name="Pasquali C."/>
            <person name="Sanchez J.-C."/>
            <person name="Tissot J.-D."/>
            <person name="Bairoch A."/>
            <person name="Appel R.D."/>
            <person name="Hochstrasser D.F."/>
        </authorList>
    </citation>
    <scope>PROTEIN SEQUENCE OF 35-45</scope>
    <source>
        <tissue>Liver</tissue>
    </source>
</reference>
<reference key="9">
    <citation type="submission" date="2008-12" db="UniProtKB">
        <authorList>
            <person name="Lubec G."/>
            <person name="Vishwanath V."/>
            <person name="Chen W.-Q."/>
            <person name="Sun Y."/>
        </authorList>
    </citation>
    <scope>PROTEIN SEQUENCE OF 86-99; 214-225; 229-248; 397-415; 424-442; 448-470 AND 473-479</scope>
    <scope>IDENTIFICATION BY MASS SPECTROMETRY</scope>
    <source>
        <tissue>Brain</tissue>
        <tissue>Cajal-Retzius cell</tissue>
        <tissue>Fetal brain cortex</tissue>
    </source>
</reference>
<reference key="10">
    <citation type="journal article" date="2004" name="Biochem. J.">
        <title>Vectorial proteomics reveal targeting, phosphorylation and specific fragmentation of polymerase I and transcript release factor (PTRF) at the surface of caveolae in human adipocytes.</title>
        <authorList>
            <person name="Aboulaich N."/>
            <person name="Vainonen J.P."/>
            <person name="Stralfors P."/>
            <person name="Vener A.V."/>
        </authorList>
    </citation>
    <scope>PROTEIN SEQUENCE OF 143-165; 181-209 AND 397-415</scope>
    <source>
        <tissue>Adipocyte</tissue>
    </source>
</reference>
<reference key="11">
    <citation type="journal article" date="2009" name="Science">
        <title>Lysine acetylation targets protein complexes and co-regulates major cellular functions.</title>
        <authorList>
            <person name="Choudhary C."/>
            <person name="Kumar C."/>
            <person name="Gnad F."/>
            <person name="Nielsen M.L."/>
            <person name="Rehman M."/>
            <person name="Walther T.C."/>
            <person name="Olsen J.V."/>
            <person name="Mann M."/>
        </authorList>
    </citation>
    <scope>ACETYLATION [LARGE SCALE ANALYSIS] AT LYS-111</scope>
    <scope>IDENTIFICATION BY MASS SPECTROMETRY [LARGE SCALE ANALYSIS]</scope>
</reference>
<reference key="12">
    <citation type="journal article" date="2011" name="BMC Syst. Biol.">
        <title>Initial characterization of the human central proteome.</title>
        <authorList>
            <person name="Burkard T.R."/>
            <person name="Planyavsky M."/>
            <person name="Kaupe I."/>
            <person name="Breitwieser F.P."/>
            <person name="Buerckstuemmer T."/>
            <person name="Bennett K.L."/>
            <person name="Superti-Furga G."/>
            <person name="Colinge J."/>
        </authorList>
    </citation>
    <scope>IDENTIFICATION BY MASS SPECTROMETRY [LARGE SCALE ANALYSIS]</scope>
</reference>
<reference key="13">
    <citation type="journal article" date="2014" name="J. Proteomics">
        <title>An enzyme assisted RP-RPLC approach for in-depth analysis of human liver phosphoproteome.</title>
        <authorList>
            <person name="Bian Y."/>
            <person name="Song C."/>
            <person name="Cheng K."/>
            <person name="Dong M."/>
            <person name="Wang F."/>
            <person name="Huang J."/>
            <person name="Sun D."/>
            <person name="Wang L."/>
            <person name="Ye M."/>
            <person name="Zou H."/>
        </authorList>
    </citation>
    <scope>IDENTIFICATION BY MASS SPECTROMETRY [LARGE SCALE ANALYSIS]</scope>
    <source>
        <tissue>Liver</tissue>
    </source>
</reference>
<reference key="14">
    <citation type="journal article" date="2015" name="Proteomics">
        <title>N-terminome analysis of the human mitochondrial proteome.</title>
        <authorList>
            <person name="Vaca Jacome A.S."/>
            <person name="Rabilloud T."/>
            <person name="Schaeffer-Reiss C."/>
            <person name="Rompais M."/>
            <person name="Ayoub D."/>
            <person name="Lane L."/>
            <person name="Bairoch A."/>
            <person name="Van Dorsselaer A."/>
            <person name="Carapito C."/>
        </authorList>
    </citation>
    <scope>CLEAVAGE OF TRANSIT PEPTIDE [LARGE SCALE ANALYSIS] AFTER SER-34</scope>
    <scope>IDENTIFICATION BY MASS SPECTROMETRY [LARGE SCALE ANALYSIS]</scope>
</reference>
<reference key="15">
    <citation type="journal article" date="2018" name="Cell Cycle">
        <title>Mitochondrial complex III Rieske Fe-S protein processing and assembly.</title>
        <authorList>
            <person name="Fernandez-Vizarra E."/>
            <person name="Zeviani M."/>
        </authorList>
    </citation>
    <scope>FUNCTION</scope>
</reference>
<reference key="16">
    <citation type="journal article" date="2020" name="Nat. Commun.">
        <title>Mitochondrial peptide BRAWNIN is essential for vertebrate respiratory complex III assembly.</title>
        <authorList>
            <person name="Zhang S."/>
            <person name="Reljic B."/>
            <person name="Liang C."/>
            <person name="Kerouanton B."/>
            <person name="Francisco J.C."/>
            <person name="Peh J.H."/>
            <person name="Mary C."/>
            <person name="Jagannathan N.S."/>
            <person name="Olexiouk V."/>
            <person name="Tang C."/>
            <person name="Fidelito G."/>
            <person name="Nama S."/>
            <person name="Cheng R.K."/>
            <person name="Wee C.L."/>
            <person name="Wang L.C."/>
            <person name="Duek Roggli P."/>
            <person name="Sampath P."/>
            <person name="Lane L."/>
            <person name="Petretto E."/>
            <person name="Sobota R.M."/>
            <person name="Jesuthasan S."/>
            <person name="Tucker-Kellogg L."/>
            <person name="Reversade B."/>
            <person name="Menschaert G."/>
            <person name="Sun L."/>
            <person name="Stroud D.A."/>
            <person name="Ho L."/>
        </authorList>
    </citation>
    <scope>INTERACTION WITH UQCC6</scope>
</reference>
<reference key="17">
    <citation type="journal article" date="2017" name="Cell">
        <title>Architecture of human mitochondrial respiratory megacomplex I2III2IV2.</title>
        <authorList>
            <person name="Guo R."/>
            <person name="Zong S."/>
            <person name="Wu M."/>
            <person name="Gu J."/>
            <person name="Yang M."/>
        </authorList>
    </citation>
    <scope>STRUCTURE BY ELECTRON MICROSCOPY (3.40 ANGSTROMS)</scope>
    <scope>SUBUNIT</scope>
</reference>
<reference key="18">
    <citation type="journal article" date="1999" name="Hum. Genet.">
        <title>A mitochondrial cytochrome b mutation but no mutations of nuclearly encoded subunits in ubiquinol cytochrome c reductase (complex III) deficiency.</title>
        <authorList>
            <person name="Valnot I."/>
            <person name="Kassis J."/>
            <person name="Chretien D."/>
            <person name="de Lonlay P."/>
            <person name="Parfait B."/>
            <person name="Munnich A."/>
            <person name="Kachaner J."/>
            <person name="Rustin P."/>
            <person name="Roetig A."/>
        </authorList>
    </citation>
    <scope>VARIANT SER-301</scope>
</reference>
<reference key="19">
    <citation type="journal article" date="2020" name="Brain">
        <title>Mitochondrial UQCRC1 mutations cause autosomal dominant parkinsonism with polyneuropathy.</title>
        <authorList>
            <person name="Lin C.H."/>
            <person name="Tsai P.I."/>
            <person name="Lin H.Y."/>
            <person name="Hattori N."/>
            <person name="Funayama M."/>
            <person name="Jeon B."/>
            <person name="Sato K."/>
            <person name="Abe K."/>
            <person name="Mukai Y."/>
            <person name="Takahashi Y."/>
            <person name="Li Y."/>
            <person name="Nishioka K."/>
            <person name="Yoshino H."/>
            <person name="Daida K."/>
            <person name="Chen M.L."/>
            <person name="Cheng J."/>
            <person name="Huang C.Y."/>
            <person name="Tzeng S.R."/>
            <person name="Wu Y.S."/>
            <person name="Lai H.J."/>
            <person name="Tsai H.H."/>
            <person name="Yen R.F."/>
            <person name="Lee N.C."/>
            <person name="Lo W.C."/>
            <person name="Hung Y.C."/>
            <person name="Chan C.C."/>
            <person name="Ke Y.C."/>
            <person name="Chao C.C."/>
            <person name="Hsieh S.T."/>
            <person name="Farrer M."/>
            <person name="Wu R.M."/>
        </authorList>
    </citation>
    <scope>INVOLVEMENT IN PKNPY</scope>
    <scope>VARIANTS PKNPY LEU-311 AND SER-314</scope>
    <scope>FUNCTION</scope>
    <scope>TISSUE SPECIFICITY</scope>
</reference>
<proteinExistence type="evidence at protein level"/>
<sequence>MAASVVCRAATAGAQVLLRARRSPALLRTPALRSTATFAQALQFVPETQVSLLDNGLRVASEQSSQPTCTVGVWIDVGSRFETEKNNGAGYFLEHLAFKGTKNRPGSALEKEVESMGAHLNAYSTREHTAYYIKALSKDLPKAVELLGDIVQNCSLEDSQIEKERDVILREMQENDASMRDVVFNYLHATAFQGTPLAQAVEGPSENVRKLSRADLTEYLSTHYKAPRMVLAAAGGVEHQQLLDLAQKHLGGIPWTYAEDAVPTLTPCRFTGSEIRHRDDALPFAHVAIAVEGPGWASPDNVALQVANAIIGHYDCTYGGGVHLSSPLASGAVANKLCQSFQTFSICYAETGLLGAHFVCDRMKIDDMMFVLQGQWMRLCTSATESEVARGKNILRNALVSHLDGTTPVCEDIGRSLLTYGRRIPLAEWESRIAEVDASVVREICSKYIYDQCPAVAGYGPIEQLPDYNRIRSGMFWLRF</sequence>
<keyword id="KW-0002">3D-structure</keyword>
<keyword id="KW-0007">Acetylation</keyword>
<keyword id="KW-0903">Direct protein sequencing</keyword>
<keyword id="KW-0225">Disease variant</keyword>
<keyword id="KW-0249">Electron transport</keyword>
<keyword id="KW-0472">Membrane</keyword>
<keyword id="KW-0496">Mitochondrion</keyword>
<keyword id="KW-0999">Mitochondrion inner membrane</keyword>
<keyword id="KW-0622">Neuropathy</keyword>
<keyword id="KW-0908">Parkinsonism</keyword>
<keyword id="KW-0597">Phosphoprotein</keyword>
<keyword id="KW-1267">Proteomics identification</keyword>
<keyword id="KW-1185">Reference proteome</keyword>
<keyword id="KW-0679">Respiratory chain</keyword>
<keyword id="KW-0809">Transit peptide</keyword>
<keyword id="KW-0813">Transport</keyword>
<organism>
    <name type="scientific">Homo sapiens</name>
    <name type="common">Human</name>
    <dbReference type="NCBI Taxonomy" id="9606"/>
    <lineage>
        <taxon>Eukaryota</taxon>
        <taxon>Metazoa</taxon>
        <taxon>Chordata</taxon>
        <taxon>Craniata</taxon>
        <taxon>Vertebrata</taxon>
        <taxon>Euteleostomi</taxon>
        <taxon>Mammalia</taxon>
        <taxon>Eutheria</taxon>
        <taxon>Euarchontoglires</taxon>
        <taxon>Primates</taxon>
        <taxon>Haplorrhini</taxon>
        <taxon>Catarrhini</taxon>
        <taxon>Hominidae</taxon>
        <taxon>Homo</taxon>
    </lineage>
</organism>
<name>QCR1_HUMAN</name>
<gene>
    <name type="primary">UQCRC1</name>
</gene>
<dbReference type="EMBL" id="L16842">
    <property type="protein sequence ID" value="AAA20046.1"/>
    <property type="molecule type" value="mRNA"/>
</dbReference>
<dbReference type="EMBL" id="D26485">
    <property type="protein sequence ID" value="BAA05495.1"/>
    <property type="molecule type" value="mRNA"/>
</dbReference>
<dbReference type="EMBL" id="AK313090">
    <property type="protein sequence ID" value="BAG35915.1"/>
    <property type="molecule type" value="mRNA"/>
</dbReference>
<dbReference type="EMBL" id="CH471055">
    <property type="protein sequence ID" value="EAW64898.1"/>
    <property type="molecule type" value="Genomic_DNA"/>
</dbReference>
<dbReference type="EMBL" id="BC009586">
    <property type="protein sequence ID" value="AAH09586.1"/>
    <property type="molecule type" value="mRNA"/>
</dbReference>
<dbReference type="CCDS" id="CCDS2774.1"/>
<dbReference type="PIR" id="A48043">
    <property type="entry name" value="A48043"/>
</dbReference>
<dbReference type="RefSeq" id="NP_003356.2">
    <property type="nucleotide sequence ID" value="NM_003365.2"/>
</dbReference>
<dbReference type="RefSeq" id="XP_054203719.1">
    <property type="nucleotide sequence ID" value="XM_054347744.1"/>
</dbReference>
<dbReference type="PDB" id="5XTE">
    <property type="method" value="EM"/>
    <property type="resolution" value="3.40 A"/>
    <property type="chains" value="L/Y=35-480"/>
</dbReference>
<dbReference type="PDB" id="5XTH">
    <property type="method" value="EM"/>
    <property type="resolution" value="3.90 A"/>
    <property type="chains" value="AL/AY=35-480"/>
</dbReference>
<dbReference type="PDB" id="5XTI">
    <property type="method" value="EM"/>
    <property type="resolution" value="17.40 A"/>
    <property type="chains" value="AL/AY=35-480"/>
</dbReference>
<dbReference type="PDBsum" id="5XTE"/>
<dbReference type="PDBsum" id="5XTH"/>
<dbReference type="PDBsum" id="5XTI"/>
<dbReference type="SMR" id="P31930"/>
<dbReference type="BioGRID" id="113230">
    <property type="interactions" value="230"/>
</dbReference>
<dbReference type="ComplexPortal" id="CPX-560">
    <property type="entry name" value="Mitochondrial respiratory chain complex III"/>
</dbReference>
<dbReference type="FunCoup" id="P31930">
    <property type="interactions" value="1647"/>
</dbReference>
<dbReference type="IntAct" id="P31930">
    <property type="interactions" value="103"/>
</dbReference>
<dbReference type="MINT" id="P31930"/>
<dbReference type="STRING" id="9606.ENSP00000203407"/>
<dbReference type="DrugBank" id="DB07763">
    <property type="generic name" value="(5S)-3-ANILINO-5-(2,4-DIFLUOROPHENYL)-5-METHYL-1,3-OXAZOLIDINE-2,4-DIONE"/>
</dbReference>
<dbReference type="DrugBank" id="DB07778">
    <property type="generic name" value="(S)-famoxadone"/>
</dbReference>
<dbReference type="DrugBank" id="DB04141">
    <property type="generic name" value="2-Hexyloxy-6-Hydroxymethyl-Tetrahydro-Pyran-3,4,5-Triol"/>
</dbReference>
<dbReference type="DrugBank" id="DB08453">
    <property type="generic name" value="2-Nonyl-4-quinolinol 1-oxide"/>
</dbReference>
<dbReference type="DrugBank" id="DB04799">
    <property type="generic name" value="6-Hydroxy-5-undecyl-4,7-benzothiazoledione"/>
</dbReference>
<dbReference type="DrugBank" id="DB07401">
    <property type="generic name" value="Azoxystrobin"/>
</dbReference>
<dbReference type="DrugBank" id="DB08330">
    <property type="generic name" value="METHYL (2Z)-3-METHOXY-2-{2-[(E)-2-PHENYLVINYL]PHENYL}ACRYLATE"/>
</dbReference>
<dbReference type="DrugBank" id="DB04741">
    <property type="generic name" value="Myxothiazol"/>
</dbReference>
<dbReference type="DrugBank" id="DB08690">
    <property type="generic name" value="Ubiquinone Q2"/>
</dbReference>
<dbReference type="MEROPS" id="M16.973"/>
<dbReference type="MEROPS" id="M16.981"/>
<dbReference type="GlyGen" id="P31930">
    <property type="glycosylation" value="2 sites, 3 N-linked glycans (1 site), 1 O-linked glycan (1 site)"/>
</dbReference>
<dbReference type="iPTMnet" id="P31930"/>
<dbReference type="MetOSite" id="P31930"/>
<dbReference type="PhosphoSitePlus" id="P31930"/>
<dbReference type="SwissPalm" id="P31930"/>
<dbReference type="BioMuta" id="UQCRC1"/>
<dbReference type="DMDM" id="92090651"/>
<dbReference type="OGP" id="P31930"/>
<dbReference type="REPRODUCTION-2DPAGE" id="IPI00013847"/>
<dbReference type="jPOST" id="P31930"/>
<dbReference type="MassIVE" id="P31930"/>
<dbReference type="PaxDb" id="9606-ENSP00000203407"/>
<dbReference type="PeptideAtlas" id="P31930"/>
<dbReference type="ProteomicsDB" id="54803"/>
<dbReference type="Pumba" id="P31930"/>
<dbReference type="Antibodypedia" id="1257">
    <property type="antibodies" value="374 antibodies from 29 providers"/>
</dbReference>
<dbReference type="DNASU" id="7384"/>
<dbReference type="Ensembl" id="ENST00000203407.6">
    <property type="protein sequence ID" value="ENSP00000203407.5"/>
    <property type="gene ID" value="ENSG00000010256.12"/>
</dbReference>
<dbReference type="GeneID" id="7384"/>
<dbReference type="KEGG" id="hsa:7384"/>
<dbReference type="MANE-Select" id="ENST00000203407.6">
    <property type="protein sequence ID" value="ENSP00000203407.5"/>
    <property type="RefSeq nucleotide sequence ID" value="NM_003365.3"/>
    <property type="RefSeq protein sequence ID" value="NP_003356.2"/>
</dbReference>
<dbReference type="UCSC" id="uc003cub.2">
    <property type="organism name" value="human"/>
</dbReference>
<dbReference type="AGR" id="HGNC:12585"/>
<dbReference type="CTD" id="7384"/>
<dbReference type="DisGeNET" id="7384"/>
<dbReference type="GeneCards" id="UQCRC1"/>
<dbReference type="HGNC" id="HGNC:12585">
    <property type="gene designation" value="UQCRC1"/>
</dbReference>
<dbReference type="HPA" id="ENSG00000010256">
    <property type="expression patterns" value="Tissue enhanced (skeletal muscle, tongue)"/>
</dbReference>
<dbReference type="MalaCards" id="UQCRC1"/>
<dbReference type="MIM" id="191328">
    <property type="type" value="gene"/>
</dbReference>
<dbReference type="MIM" id="619279">
    <property type="type" value="phenotype"/>
</dbReference>
<dbReference type="neXtProt" id="NX_P31930"/>
<dbReference type="OpenTargets" id="ENSG00000010256"/>
<dbReference type="PharmGKB" id="PA37216"/>
<dbReference type="VEuPathDB" id="HostDB:ENSG00000010256"/>
<dbReference type="eggNOG" id="KOG0960">
    <property type="taxonomic scope" value="Eukaryota"/>
</dbReference>
<dbReference type="GeneTree" id="ENSGT00940000158931"/>
<dbReference type="HOGENOM" id="CLU_009902_4_0_1"/>
<dbReference type="InParanoid" id="P31930"/>
<dbReference type="OMA" id="HFAQGEW"/>
<dbReference type="OrthoDB" id="10251424at2759"/>
<dbReference type="PAN-GO" id="P31930">
    <property type="GO annotations" value="1 GO annotation based on evolutionary models"/>
</dbReference>
<dbReference type="PhylomeDB" id="P31930"/>
<dbReference type="TreeFam" id="TF105032"/>
<dbReference type="BioCyc" id="MetaCyc:HS00277-MONOMER"/>
<dbReference type="PathwayCommons" id="P31930"/>
<dbReference type="Reactome" id="R-HSA-611105">
    <property type="pathway name" value="Respiratory electron transport"/>
</dbReference>
<dbReference type="Reactome" id="R-HSA-9865881">
    <property type="pathway name" value="Complex III assembly"/>
</dbReference>
<dbReference type="SignaLink" id="P31930"/>
<dbReference type="SIGNOR" id="P31930"/>
<dbReference type="BioGRID-ORCS" id="7384">
    <property type="hits" value="417 hits in 1176 CRISPR screens"/>
</dbReference>
<dbReference type="CD-CODE" id="91857CE7">
    <property type="entry name" value="Nucleolus"/>
</dbReference>
<dbReference type="CD-CODE" id="FB4E32DD">
    <property type="entry name" value="Presynaptic clusters and postsynaptic densities"/>
</dbReference>
<dbReference type="ChiTaRS" id="UQCRC1">
    <property type="organism name" value="human"/>
</dbReference>
<dbReference type="GeneWiki" id="UQCRC1"/>
<dbReference type="GenomeRNAi" id="7384"/>
<dbReference type="Pharos" id="P31930">
    <property type="development level" value="Tbio"/>
</dbReference>
<dbReference type="PRO" id="PR:P31930"/>
<dbReference type="Proteomes" id="UP000005640">
    <property type="component" value="Chromosome 3"/>
</dbReference>
<dbReference type="RNAct" id="P31930">
    <property type="molecule type" value="protein"/>
</dbReference>
<dbReference type="Bgee" id="ENSG00000010256">
    <property type="expression patterns" value="Expressed in apex of heart and 210 other cell types or tissues"/>
</dbReference>
<dbReference type="ExpressionAtlas" id="P31930">
    <property type="expression patterns" value="baseline and differential"/>
</dbReference>
<dbReference type="GO" id="GO:0005743">
    <property type="term" value="C:mitochondrial inner membrane"/>
    <property type="evidence" value="ECO:0000314"/>
    <property type="project" value="ComplexPortal"/>
</dbReference>
<dbReference type="GO" id="GO:0005739">
    <property type="term" value="C:mitochondrion"/>
    <property type="evidence" value="ECO:0000314"/>
    <property type="project" value="HPA"/>
</dbReference>
<dbReference type="GO" id="GO:0098803">
    <property type="term" value="C:respiratory chain complex"/>
    <property type="evidence" value="ECO:0000304"/>
    <property type="project" value="ProtInc"/>
</dbReference>
<dbReference type="GO" id="GO:0045275">
    <property type="term" value="C:respiratory chain complex III"/>
    <property type="evidence" value="ECO:0007669"/>
    <property type="project" value="Ensembl"/>
</dbReference>
<dbReference type="GO" id="GO:0046872">
    <property type="term" value="F:metal ion binding"/>
    <property type="evidence" value="ECO:0007669"/>
    <property type="project" value="InterPro"/>
</dbReference>
<dbReference type="GO" id="GO:0044877">
    <property type="term" value="F:protein-containing complex binding"/>
    <property type="evidence" value="ECO:0007669"/>
    <property type="project" value="Ensembl"/>
</dbReference>
<dbReference type="GO" id="GO:0008121">
    <property type="term" value="F:ubiquinol-cytochrome-c reductase activity"/>
    <property type="evidence" value="ECO:0000304"/>
    <property type="project" value="ProtInc"/>
</dbReference>
<dbReference type="GO" id="GO:0031625">
    <property type="term" value="F:ubiquitin protein ligase binding"/>
    <property type="evidence" value="ECO:0000353"/>
    <property type="project" value="ParkinsonsUK-UCL"/>
</dbReference>
<dbReference type="GO" id="GO:0009060">
    <property type="term" value="P:aerobic respiration"/>
    <property type="evidence" value="ECO:0000304"/>
    <property type="project" value="ProtInc"/>
</dbReference>
<dbReference type="GO" id="GO:0045333">
    <property type="term" value="P:cellular respiration"/>
    <property type="evidence" value="ECO:0000303"/>
    <property type="project" value="ComplexPortal"/>
</dbReference>
<dbReference type="GO" id="GO:0006122">
    <property type="term" value="P:mitochondrial electron transport, ubiquinol to cytochrome c"/>
    <property type="evidence" value="ECO:0000303"/>
    <property type="project" value="ComplexPortal"/>
</dbReference>
<dbReference type="GO" id="GO:0006119">
    <property type="term" value="P:oxidative phosphorylation"/>
    <property type="evidence" value="ECO:0000304"/>
    <property type="project" value="ProtInc"/>
</dbReference>
<dbReference type="GO" id="GO:0014823">
    <property type="term" value="P:response to activity"/>
    <property type="evidence" value="ECO:0007669"/>
    <property type="project" value="Ensembl"/>
</dbReference>
<dbReference type="GO" id="GO:0043279">
    <property type="term" value="P:response to alkaloid"/>
    <property type="evidence" value="ECO:0007669"/>
    <property type="project" value="Ensembl"/>
</dbReference>
<dbReference type="FunFam" id="3.30.830.10:FF:000016">
    <property type="entry name" value="Cytochrome b-c1 complex subunit 1, mitochondrial"/>
    <property type="match status" value="1"/>
</dbReference>
<dbReference type="FunFam" id="3.30.830.10:FF:000001">
    <property type="entry name" value="Mitochondrial-processing peptidase subunit beta, mitochondrial"/>
    <property type="match status" value="1"/>
</dbReference>
<dbReference type="Gene3D" id="3.30.830.10">
    <property type="entry name" value="Metalloenzyme, LuxS/M16 peptidase-like"/>
    <property type="match status" value="2"/>
</dbReference>
<dbReference type="InterPro" id="IPR011249">
    <property type="entry name" value="Metalloenz_LuxS/M16"/>
</dbReference>
<dbReference type="InterPro" id="IPR050361">
    <property type="entry name" value="MPP/UQCRC_Complex"/>
</dbReference>
<dbReference type="InterPro" id="IPR011765">
    <property type="entry name" value="Pept_M16_N"/>
</dbReference>
<dbReference type="InterPro" id="IPR007863">
    <property type="entry name" value="Peptidase_M16_C"/>
</dbReference>
<dbReference type="PANTHER" id="PTHR11851:SF116">
    <property type="entry name" value="CYTOCHROME B-C1 COMPLEX SUBUNIT 1, MITOCHONDRIAL"/>
    <property type="match status" value="1"/>
</dbReference>
<dbReference type="PANTHER" id="PTHR11851">
    <property type="entry name" value="METALLOPROTEASE"/>
    <property type="match status" value="1"/>
</dbReference>
<dbReference type="Pfam" id="PF00675">
    <property type="entry name" value="Peptidase_M16"/>
    <property type="match status" value="1"/>
</dbReference>
<dbReference type="Pfam" id="PF05193">
    <property type="entry name" value="Peptidase_M16_C"/>
    <property type="match status" value="1"/>
</dbReference>
<dbReference type="SUPFAM" id="SSF63411">
    <property type="entry name" value="LuxS/MPP-like metallohydrolase"/>
    <property type="match status" value="2"/>
</dbReference>
<evidence type="ECO:0000250" key="1">
    <source>
        <dbReference type="UniProtKB" id="P07256"/>
    </source>
</evidence>
<evidence type="ECO:0000250" key="2">
    <source>
        <dbReference type="UniProtKB" id="P31800"/>
    </source>
</evidence>
<evidence type="ECO:0000250" key="3">
    <source>
        <dbReference type="UniProtKB" id="Q68FY0"/>
    </source>
</evidence>
<evidence type="ECO:0000250" key="4">
    <source>
        <dbReference type="UniProtKB" id="Q9CZ13"/>
    </source>
</evidence>
<evidence type="ECO:0000269" key="5">
    <source>
    </source>
</evidence>
<evidence type="ECO:0000269" key="6">
    <source>
    </source>
</evidence>
<evidence type="ECO:0000269" key="7">
    <source>
    </source>
</evidence>
<evidence type="ECO:0000269" key="8">
    <source>
    </source>
</evidence>
<evidence type="ECO:0000269" key="9">
    <source>
    </source>
</evidence>
<evidence type="ECO:0000269" key="10">
    <source>
    </source>
</evidence>
<evidence type="ECO:0000305" key="11"/>
<evidence type="ECO:0000305" key="12">
    <source>
    </source>
</evidence>
<evidence type="ECO:0007744" key="13">
    <source>
    </source>
</evidence>
<evidence type="ECO:0007744" key="14">
    <source>
    </source>
</evidence>
<evidence type="ECO:0007829" key="15">
    <source>
        <dbReference type="PDB" id="5XTE"/>
    </source>
</evidence>
<protein>
    <recommendedName>
        <fullName>Cytochrome b-c1 complex subunit 1, mitochondrial</fullName>
    </recommendedName>
    <alternativeName>
        <fullName>Complex III subunit 1</fullName>
    </alternativeName>
    <alternativeName>
        <fullName>Core protein I</fullName>
    </alternativeName>
    <alternativeName>
        <fullName>Ubiquinol-cytochrome-c reductase complex core protein 1</fullName>
    </alternativeName>
</protein>
<accession>P31930</accession>
<accession>B2R7R8</accession>
<accession>Q96DD2</accession>
<comment type="function">
    <text evidence="1 2 8 12">Component of the ubiquinol-cytochrome c oxidoreductase, a multisubunit transmembrane complex that is part of the mitochondrial electron transport chain which drives oxidative phosphorylation. The respiratory chain contains 3 multisubunit complexes succinate dehydrogenase (complex II, CII), ubiquinol-cytochrome c oxidoreductase (cytochrome b-c1 complex, complex III, CIII) and cytochrome c oxidase (complex IV, CIV), that cooperate to transfer electrons derived from NADH and succinate to molecular oxygen, creating an electrochemical gradient over the inner membrane that drives transmembrane transport and the ATP synthase. The cytochrome b-c1 complex catalyzes electron transfer from ubiquinol to cytochrome c, linking this redox reaction to translocation of protons across the mitochondrial inner membrane, with protons being carried across the membrane as hydrogens on the quinol. In the process called Q cycle, 2 protons are consumed from the matrix, 4 protons are released into the intermembrane space and 2 electrons are passed to cytochrome c (By similarity). The 2 core subunits UQCRC1/QCR1 and UQCRC2/QCR2 are homologous to the 2 mitochondrial-processing peptidase (MPP) subunits beta-MPP and alpha-MPP respectively, and they seem to have preserved their MPP processing properties (By similarity). May be involved in the in situ processing of UQCRFS1 into the mature Rieske protein and its mitochondrial targeting sequence (MTS)/subunit 9 when incorporated into complex III (Probable). Seems to play an important role in the maintenance of proper mitochondrial function in nigral dopaminergic neurons (PubMed:33141179).</text>
</comment>
<comment type="subunit">
    <text evidence="2 4 6 7">Component of the ubiquinol-cytochrome c oxidoreductase (cytochrome b-c1 complex, complex III, CIII), a multisubunit enzyme composed of 11 subunits. The complex is composed of 3 respiratory subunits cytochrome b, cytochrome c1 and Rieske protein UQCRFS1, 2 core protein subunits UQCRC1/QCR1 and UQCRC2/QCR2, and 6 low-molecular weight protein subunits UQCRH/QCR6, UQCRB/QCR7, UQCRQ/QCR8, UQCR10/QCR9, UQCR11/QCR10 and subunit 9, the cleavage product of Rieske protein UQCRFS1 (By similarity). The complex exists as an obligatory dimer and forms supercomplexes (SCs) in the inner mitochondrial membrane with NADH-ubiquinone oxidoreductase (complex I, CI) and cytochrome c oxidase (complex IV, CIV), resulting in different assemblies (supercomplex SCI(1)III(2)IV(1) and megacomplex MCI(2)III(2)IV(2)) (PubMed:28844695). Interacts with UQCC6 (PubMed:32161263). Interacts with STMP1 (By similarity).</text>
</comment>
<comment type="interaction">
    <interactant intactId="EBI-1052596">
        <id>P31930</id>
    </interactant>
    <interactant intactId="EBI-2806617">
        <id>P52566</id>
        <label>ARHGDIB</label>
    </interactant>
    <organismsDiffer>false</organismsDiffer>
    <experiments>3</experiments>
</comment>
<comment type="interaction">
    <interactant intactId="EBI-1052596">
        <id>P31930</id>
    </interactant>
    <interactant intactId="EBI-949378">
        <id>Q14457</id>
        <label>BECN1</label>
    </interactant>
    <organismsDiffer>false</organismsDiffer>
    <experiments>3</experiments>
</comment>
<comment type="interaction">
    <interactant intactId="EBI-1052596">
        <id>P31930</id>
    </interactant>
    <interactant intactId="EBI-741214">
        <id>Q9UFG5</id>
        <label>C19orf25</label>
    </interactant>
    <organismsDiffer>false</organismsDiffer>
    <experiments>3</experiments>
</comment>
<comment type="interaction">
    <interactant intactId="EBI-1052596">
        <id>P31930</id>
    </interactant>
    <interactant intactId="EBI-12904676">
        <id>Q8WU43</id>
        <label>C2orf15</label>
    </interactant>
    <organismsDiffer>false</organismsDiffer>
    <experiments>3</experiments>
</comment>
<comment type="interaction">
    <interactant intactId="EBI-1052596">
        <id>P31930</id>
    </interactant>
    <interactant intactId="EBI-21668062">
        <id>Q8IV13</id>
        <label>CCNJL</label>
    </interactant>
    <organismsDiffer>false</organismsDiffer>
    <experiments>3</experiments>
</comment>
<comment type="interaction">
    <interactant intactId="EBI-1052596">
        <id>P31930</id>
    </interactant>
    <interactant intactId="EBI-1550310">
        <id>Q9Y6G5</id>
        <label>COMMD10</label>
    </interactant>
    <organismsDiffer>false</organismsDiffer>
    <experiments>3</experiments>
</comment>
<comment type="interaction">
    <interactant intactId="EBI-1052596">
        <id>P31930</id>
    </interactant>
    <interactant intactId="EBI-351467">
        <id>P26641</id>
        <label>EEF1G</label>
    </interactant>
    <organismsDiffer>false</organismsDiffer>
    <experiments>3</experiments>
</comment>
<comment type="interaction">
    <interactant intactId="EBI-1052596">
        <id>P31930</id>
    </interactant>
    <interactant intactId="EBI-2340132">
        <id>Q9UI10</id>
        <label>EIF2B4</label>
    </interactant>
    <organismsDiffer>false</organismsDiffer>
    <experiments>3</experiments>
</comment>
<comment type="interaction">
    <interactant intactId="EBI-1052596">
        <id>P31930</id>
    </interactant>
    <interactant intactId="EBI-618189">
        <id>Q06547-2</id>
        <label>GABPB1</label>
    </interactant>
    <organismsDiffer>false</organismsDiffer>
    <experiments>3</experiments>
</comment>
<comment type="interaction">
    <interactant intactId="EBI-1052596">
        <id>P31930</id>
    </interactant>
    <interactant intactId="EBI-746674">
        <id>Q9HC44</id>
        <label>GPBP1L1</label>
    </interactant>
    <organismsDiffer>false</organismsDiffer>
    <experiments>3</experiments>
</comment>
<comment type="interaction">
    <interactant intactId="EBI-1052596">
        <id>P31930</id>
    </interactant>
    <interactant intactId="EBI-743960">
        <id>Q8N5Z5</id>
        <label>KCTD17</label>
    </interactant>
    <organismsDiffer>false</organismsDiffer>
    <experiments>3</experiments>
</comment>
<comment type="interaction">
    <interactant intactId="EBI-1052596">
        <id>P31930</id>
    </interactant>
    <interactant intactId="EBI-11985629">
        <id>Q96JM7-2</id>
        <label>L3MBTL3</label>
    </interactant>
    <organismsDiffer>false</organismsDiffer>
    <experiments>3</experiments>
</comment>
<comment type="interaction">
    <interactant intactId="EBI-1052596">
        <id>P31930</id>
    </interactant>
    <interactant intactId="EBI-25830642">
        <id>Q8N108-16</id>
        <label>MIER1</label>
    </interactant>
    <organismsDiffer>false</organismsDiffer>
    <experiments>3</experiments>
</comment>
<comment type="interaction">
    <interactant intactId="EBI-1052596">
        <id>P31930</id>
    </interactant>
    <interactant intactId="EBI-25830675">
        <id>C9J082</id>
        <label>NPHP1</label>
    </interactant>
    <organismsDiffer>false</organismsDiffer>
    <experiments>3</experiments>
</comment>
<comment type="interaction">
    <interactant intactId="EBI-1052596">
        <id>P31930</id>
    </interactant>
    <interactant intactId="EBI-359873">
        <id>Q9UHV9</id>
        <label>PFDN2</label>
    </interactant>
    <organismsDiffer>false</organismsDiffer>
    <experiments>3</experiments>
</comment>
<comment type="interaction">
    <interactant intactId="EBI-1052596">
        <id>P31930</id>
    </interactant>
    <interactant intactId="EBI-1042490">
        <id>Q00169</id>
        <label>PITPNA</label>
    </interactant>
    <organismsDiffer>false</organismsDiffer>
    <experiments>3</experiments>
</comment>
<comment type="interaction">
    <interactant intactId="EBI-1052596">
        <id>P31930</id>
    </interactant>
    <interactant intactId="EBI-351098">
        <id>O14744</id>
        <label>PRMT5</label>
    </interactant>
    <organismsDiffer>false</organismsDiffer>
    <experiments>3</experiments>
</comment>
<comment type="interaction">
    <interactant intactId="EBI-1052596">
        <id>P31930</id>
    </interactant>
    <interactant intactId="EBI-9087806">
        <id>O95416</id>
        <label>SOX14</label>
    </interactant>
    <organismsDiffer>false</organismsDiffer>
    <experiments>3</experiments>
</comment>
<comment type="interaction">
    <interactant intactId="EBI-1052596">
        <id>P31930</id>
    </interactant>
    <interactant intactId="EBI-1773488">
        <id>Q9BUA3</id>
        <label>SPINDOC</label>
    </interactant>
    <organismsDiffer>false</organismsDiffer>
    <experiments>3</experiments>
</comment>
<comment type="interaction">
    <interactant intactId="EBI-1052596">
        <id>P31930</id>
    </interactant>
    <interactant intactId="EBI-10179062">
        <id>O43704</id>
        <label>SULT1B1</label>
    </interactant>
    <organismsDiffer>false</organismsDiffer>
    <experiments>3</experiments>
</comment>
<comment type="interaction">
    <interactant intactId="EBI-1052596">
        <id>P31930</id>
    </interactant>
    <interactant intactId="EBI-2824328">
        <id>O95947</id>
        <label>TBX6</label>
    </interactant>
    <organismsDiffer>false</organismsDiffer>
    <experiments>3</experiments>
</comment>
<comment type="interaction">
    <interactant intactId="EBI-1052596">
        <id>P31930</id>
    </interactant>
    <interactant intactId="EBI-17438286">
        <id>Q8WTV1</id>
        <label>THAP3</label>
    </interactant>
    <organismsDiffer>false</organismsDiffer>
    <experiments>3</experiments>
</comment>
<comment type="interaction">
    <interactant intactId="EBI-1052596">
        <id>P31930</id>
    </interactant>
    <interactant intactId="EBI-1032551">
        <id>Q9BZM4</id>
        <label>ULBP3</label>
    </interactant>
    <organismsDiffer>false</organismsDiffer>
    <experiments>3</experiments>
</comment>
<comment type="interaction">
    <interactant intactId="EBI-1052596">
        <id>P31930</id>
    </interactant>
    <interactant intactId="EBI-25857007">
        <id>Q6ZMY6-2</id>
        <label>WDR88</label>
    </interactant>
    <organismsDiffer>false</organismsDiffer>
    <experiments>3</experiments>
</comment>
<comment type="interaction">
    <interactant intactId="EBI-1052596">
        <id>P31930</id>
    </interactant>
    <interactant intactId="EBI-749023">
        <id>Q9UNY5</id>
        <label>ZNF232</label>
    </interactant>
    <organismsDiffer>false</organismsDiffer>
    <experiments>3</experiments>
</comment>
<comment type="interaction">
    <interactant intactId="EBI-1052596">
        <id>P31930</id>
    </interactant>
    <interactant intactId="EBI-25831733">
        <id>Q96MN9-2</id>
        <label>ZNF488</label>
    </interactant>
    <organismsDiffer>false</organismsDiffer>
    <experiments>3</experiments>
</comment>
<comment type="interaction">
    <interactant intactId="EBI-1052596">
        <id>P31930</id>
    </interactant>
    <interactant intactId="EBI-10279993">
        <id>Q8N8E2</id>
        <label>ZNF513</label>
    </interactant>
    <organismsDiffer>false</organismsDiffer>
    <experiments>3</experiments>
</comment>
<comment type="interaction">
    <interactant intactId="EBI-1052596">
        <id>P31930</id>
    </interactant>
    <interactant intactId="EBI-745520">
        <id>Q9P0T4</id>
        <label>ZNF581</label>
    </interactant>
    <organismsDiffer>false</organismsDiffer>
    <experiments>3</experiments>
</comment>
<comment type="interaction">
    <interactant intactId="EBI-1052596">
        <id>P31930</id>
    </interactant>
    <interactant intactId="EBI-1054417">
        <id>Q9BRT8</id>
        <label>ZNG1A</label>
    </interactant>
    <organismsDiffer>false</organismsDiffer>
    <experiments>3</experiments>
</comment>
<comment type="subcellular location">
    <subcellularLocation>
        <location evidence="1">Mitochondrion inner membrane</location>
        <topology evidence="1">Peripheral membrane protein</topology>
        <orientation evidence="1">Matrix side</orientation>
    </subcellularLocation>
</comment>
<comment type="tissue specificity">
    <text evidence="8">Expressed in brain, including substantia nigra, striatum, cortex and cerebellum, and in spinal cord, heart, kidney, liver and muscle.</text>
</comment>
<comment type="disease" evidence="8">
    <disease id="DI-06084">
        <name>Parkinsonism with polyneuropathy</name>
        <acronym>PKNPY</acronym>
        <description>An autosomal dominant disorder characterized by late-onset, levodopa-responsive parkinsonism with asymmetric tremor, rigidity and bradykinesia. Patients also manifest a sensorimotor polyneuropathy with variable degrees of distal legs and hands muscle atrophy and weakness, and absent deep tendon reflexes.</description>
        <dbReference type="MIM" id="619279"/>
    </disease>
    <text>The protein represented in this entry is involved in disease pathogenesis.</text>
</comment>
<comment type="similarity">
    <text evidence="11">Belongs to the peptidase M16 family. UQCRC1/QCR1 subfamily.</text>
</comment>
<feature type="transit peptide" description="Mitochondrion" evidence="9 14">
    <location>
        <begin position="1"/>
        <end position="34"/>
    </location>
</feature>
<feature type="chain" id="PRO_0000026786" description="Cytochrome b-c1 complex subunit 1, mitochondrial">
    <location>
        <begin position="35"/>
        <end position="480"/>
    </location>
</feature>
<feature type="modified residue" description="N6-acetyllysine" evidence="13">
    <location>
        <position position="111"/>
    </location>
</feature>
<feature type="modified residue" description="N6-acetyllysine" evidence="4">
    <location>
        <position position="138"/>
    </location>
</feature>
<feature type="modified residue" description="N6-acetyllysine; alternate" evidence="4">
    <location>
        <position position="163"/>
    </location>
</feature>
<feature type="modified residue" description="N6-succinyllysine; alternate" evidence="4">
    <location>
        <position position="163"/>
    </location>
</feature>
<feature type="modified residue" description="Phosphoserine" evidence="3">
    <location>
        <position position="212"/>
    </location>
</feature>
<feature type="modified residue" description="N6-acetyllysine" evidence="4">
    <location>
        <position position="248"/>
    </location>
</feature>
<feature type="sequence variant" id="VAR_034581" description="In dbSNP:rs17080284.">
    <original>D</original>
    <variation>H</variation>
    <location>
        <position position="215"/>
    </location>
</feature>
<feature type="sequence variant" id="VAR_013629" description="In dbSNP:rs144710790." evidence="5 10">
    <original>N</original>
    <variation>S</variation>
    <location>
        <position position="301"/>
    </location>
</feature>
<feature type="sequence variant" id="VAR_085428" description="In PKNPY; dbSNP:rs2107843274." evidence="8">
    <original>I</original>
    <variation>L</variation>
    <location>
        <position position="311"/>
    </location>
</feature>
<feature type="sequence variant" id="VAR_085429" description="In PKNPY; dbSNP:rs780978963." evidence="8">
    <original>Y</original>
    <variation>S</variation>
    <location>
        <position position="314"/>
    </location>
</feature>
<feature type="helix" evidence="15">
    <location>
        <begin position="38"/>
        <end position="44"/>
    </location>
</feature>
<feature type="strand" evidence="15">
    <location>
        <begin position="67"/>
        <end position="69"/>
    </location>
</feature>
<feature type="helix" evidence="15">
    <location>
        <begin position="84"/>
        <end position="86"/>
    </location>
</feature>
<feature type="helix" evidence="15">
    <location>
        <begin position="89"/>
        <end position="95"/>
    </location>
</feature>
<feature type="strand" evidence="15">
    <location>
        <begin position="96"/>
        <end position="99"/>
    </location>
</feature>
<feature type="strand" evidence="15">
    <location>
        <begin position="102"/>
        <end position="104"/>
    </location>
</feature>
<feature type="helix" evidence="15">
    <location>
        <begin position="106"/>
        <end position="116"/>
    </location>
</feature>
<feature type="strand" evidence="15">
    <location>
        <begin position="121"/>
        <end position="124"/>
    </location>
</feature>
<feature type="strand" evidence="15">
    <location>
        <begin position="129"/>
        <end position="132"/>
    </location>
</feature>
<feature type="helix" evidence="15">
    <location>
        <begin position="137"/>
        <end position="139"/>
    </location>
</feature>
<feature type="helix" evidence="15">
    <location>
        <begin position="140"/>
        <end position="150"/>
    </location>
</feature>
<feature type="helix" evidence="15">
    <location>
        <begin position="158"/>
        <end position="175"/>
    </location>
</feature>
<feature type="helix" evidence="15">
    <location>
        <begin position="181"/>
        <end position="192"/>
    </location>
</feature>
<feature type="helix" evidence="15">
    <location>
        <begin position="196"/>
        <end position="198"/>
    </location>
</feature>
<feature type="helix" evidence="15">
    <location>
        <begin position="205"/>
        <end position="208"/>
    </location>
</feature>
<feature type="helix" evidence="15">
    <location>
        <begin position="213"/>
        <end position="222"/>
    </location>
</feature>
<feature type="helix" evidence="15">
    <location>
        <begin position="239"/>
        <end position="250"/>
    </location>
</feature>
<feature type="helix" evidence="15">
    <location>
        <begin position="258"/>
        <end position="260"/>
    </location>
</feature>
<feature type="strand" evidence="15">
    <location>
        <begin position="285"/>
        <end position="294"/>
    </location>
</feature>
<feature type="helix" evidence="15">
    <location>
        <begin position="300"/>
        <end position="311"/>
    </location>
</feature>
<feature type="helix" evidence="15">
    <location>
        <begin position="327"/>
        <end position="332"/>
    </location>
</feature>
<feature type="turn" evidence="15">
    <location>
        <begin position="333"/>
        <end position="336"/>
    </location>
</feature>
<feature type="strand" evidence="15">
    <location>
        <begin position="339"/>
        <end position="347"/>
    </location>
</feature>
<feature type="strand" evidence="15">
    <location>
        <begin position="349"/>
        <end position="360"/>
    </location>
</feature>
<feature type="turn" evidence="15">
    <location>
        <begin position="362"/>
        <end position="364"/>
    </location>
</feature>
<feature type="helix" evidence="15">
    <location>
        <begin position="365"/>
        <end position="380"/>
    </location>
</feature>
<feature type="helix" evidence="15">
    <location>
        <begin position="385"/>
        <end position="401"/>
    </location>
</feature>
<feature type="helix" evidence="15">
    <location>
        <begin position="406"/>
        <end position="419"/>
    </location>
</feature>
<feature type="helix" evidence="15">
    <location>
        <begin position="426"/>
        <end position="434"/>
    </location>
</feature>
<feature type="helix" evidence="15">
    <location>
        <begin position="438"/>
        <end position="448"/>
    </location>
</feature>
<feature type="turn" evidence="15">
    <location>
        <begin position="449"/>
        <end position="451"/>
    </location>
</feature>
<feature type="strand" evidence="15">
    <location>
        <begin position="455"/>
        <end position="461"/>
    </location>
</feature>
<feature type="strand" evidence="15">
    <location>
        <begin position="463"/>
        <end position="465"/>
    </location>
</feature>
<feature type="helix" evidence="15">
    <location>
        <begin position="468"/>
        <end position="472"/>
    </location>
</feature>
<feature type="helix" evidence="15">
    <location>
        <begin position="473"/>
        <end position="475"/>
    </location>
</feature>